<dbReference type="EMBL" id="L42023">
    <property type="protein sequence ID" value="AAC22555.1"/>
    <property type="molecule type" value="Genomic_DNA"/>
</dbReference>
<dbReference type="PIR" id="H64100">
    <property type="entry name" value="H64100"/>
</dbReference>
<dbReference type="RefSeq" id="NP_439056.1">
    <property type="nucleotide sequence ID" value="NC_000907.1"/>
</dbReference>
<dbReference type="SMR" id="Q57124"/>
<dbReference type="STRING" id="71421.HI_0895"/>
<dbReference type="TCDB" id="2.A.6.2.50">
    <property type="family name" value="the resistance-nodulation-cell division (rnd) superfamily"/>
</dbReference>
<dbReference type="EnsemblBacteria" id="AAC22555">
    <property type="protein sequence ID" value="AAC22555"/>
    <property type="gene ID" value="HI_0895"/>
</dbReference>
<dbReference type="KEGG" id="hin:HI_0895"/>
<dbReference type="PATRIC" id="fig|71421.8.peg.937"/>
<dbReference type="eggNOG" id="COG0841">
    <property type="taxonomic scope" value="Bacteria"/>
</dbReference>
<dbReference type="HOGENOM" id="CLU_002755_1_2_6"/>
<dbReference type="OrthoDB" id="9758297at2"/>
<dbReference type="PhylomeDB" id="Q57124"/>
<dbReference type="BioCyc" id="HINF71421:G1GJ1-935-MONOMER"/>
<dbReference type="Proteomes" id="UP000000579">
    <property type="component" value="Chromosome"/>
</dbReference>
<dbReference type="GO" id="GO:0005886">
    <property type="term" value="C:plasma membrane"/>
    <property type="evidence" value="ECO:0000318"/>
    <property type="project" value="GO_Central"/>
</dbReference>
<dbReference type="GO" id="GO:0042910">
    <property type="term" value="F:xenobiotic transmembrane transporter activity"/>
    <property type="evidence" value="ECO:0000318"/>
    <property type="project" value="GO_Central"/>
</dbReference>
<dbReference type="FunFam" id="1.20.1640.10:FF:000001">
    <property type="entry name" value="Efflux pump membrane transporter"/>
    <property type="match status" value="1"/>
</dbReference>
<dbReference type="Gene3D" id="3.30.70.1430">
    <property type="entry name" value="Multidrug efflux transporter AcrB pore domain"/>
    <property type="match status" value="2"/>
</dbReference>
<dbReference type="Gene3D" id="3.30.70.1440">
    <property type="entry name" value="Multidrug efflux transporter AcrB pore domain"/>
    <property type="match status" value="1"/>
</dbReference>
<dbReference type="Gene3D" id="3.30.70.1320">
    <property type="entry name" value="Multidrug efflux transporter AcrB pore domain like"/>
    <property type="match status" value="1"/>
</dbReference>
<dbReference type="Gene3D" id="3.30.2090.10">
    <property type="entry name" value="Multidrug efflux transporter AcrB TolC docking domain, DN and DC subdomains"/>
    <property type="match status" value="2"/>
</dbReference>
<dbReference type="Gene3D" id="1.20.1640.10">
    <property type="entry name" value="Multidrug efflux transporter AcrB transmembrane domain"/>
    <property type="match status" value="2"/>
</dbReference>
<dbReference type="InterPro" id="IPR027463">
    <property type="entry name" value="AcrB_DN_DC_subdom"/>
</dbReference>
<dbReference type="InterPro" id="IPR001036">
    <property type="entry name" value="Acrflvin-R"/>
</dbReference>
<dbReference type="PANTHER" id="PTHR32063">
    <property type="match status" value="1"/>
</dbReference>
<dbReference type="PANTHER" id="PTHR32063:SF28">
    <property type="entry name" value="BLR2861 PROTEIN"/>
    <property type="match status" value="1"/>
</dbReference>
<dbReference type="Pfam" id="PF00873">
    <property type="entry name" value="ACR_tran"/>
    <property type="match status" value="1"/>
</dbReference>
<dbReference type="PRINTS" id="PR00702">
    <property type="entry name" value="ACRIFLAVINRP"/>
</dbReference>
<dbReference type="SUPFAM" id="SSF82693">
    <property type="entry name" value="Multidrug efflux transporter AcrB pore domain, PN1, PN2, PC1 and PC2 subdomains"/>
    <property type="match status" value="3"/>
</dbReference>
<dbReference type="SUPFAM" id="SSF82714">
    <property type="entry name" value="Multidrug efflux transporter AcrB TolC docking domain, DN and DC subdomains"/>
    <property type="match status" value="2"/>
</dbReference>
<dbReference type="SUPFAM" id="SSF82866">
    <property type="entry name" value="Multidrug efflux transporter AcrB transmembrane domain"/>
    <property type="match status" value="2"/>
</dbReference>
<feature type="chain" id="PRO_0000161856" description="Uncharacterized transporter HI_0895">
    <location>
        <begin position="1"/>
        <end position="1032"/>
    </location>
</feature>
<feature type="topological domain" description="Cytoplasmic" evidence="1">
    <location>
        <begin position="1"/>
        <end position="17"/>
    </location>
</feature>
<feature type="transmembrane region" description="Helical; Name=1" evidence="1">
    <location>
        <begin position="18"/>
        <end position="36"/>
    </location>
</feature>
<feature type="topological domain" description="Periplasmic" evidence="1">
    <location>
        <begin position="37"/>
        <end position="337"/>
    </location>
</feature>
<feature type="transmembrane region" description="Helical; Name=2" evidence="1">
    <location>
        <begin position="338"/>
        <end position="357"/>
    </location>
</feature>
<feature type="topological domain" description="Cytoplasmic" evidence="1">
    <location>
        <begin position="358"/>
        <end position="363"/>
    </location>
</feature>
<feature type="transmembrane region" description="Helical; Name=3" evidence="1">
    <location>
        <begin position="364"/>
        <end position="383"/>
    </location>
</feature>
<feature type="topological domain" description="Periplasmic" evidence="1">
    <location>
        <begin position="384"/>
        <end position="389"/>
    </location>
</feature>
<feature type="transmembrane region" description="Helical; Name=4" evidence="1">
    <location>
        <begin position="390"/>
        <end position="411"/>
    </location>
</feature>
<feature type="topological domain" description="Cytoplasmic" evidence="1">
    <location>
        <begin position="412"/>
        <end position="438"/>
    </location>
</feature>
<feature type="transmembrane region" description="Helical; Name=5" evidence="1">
    <location>
        <begin position="439"/>
        <end position="457"/>
    </location>
</feature>
<feature type="topological domain" description="Periplasmic" evidence="1">
    <location>
        <begin position="458"/>
        <end position="470"/>
    </location>
</feature>
<feature type="transmembrane region" description="Helical; Name=6" evidence="1">
    <location>
        <begin position="471"/>
        <end position="493"/>
    </location>
</feature>
<feature type="topological domain" description="Cytoplasmic" evidence="1">
    <location>
        <begin position="494"/>
        <end position="529"/>
    </location>
</feature>
<feature type="transmembrane region" description="Helical; Name=7" evidence="1">
    <location>
        <begin position="530"/>
        <end position="548"/>
    </location>
</feature>
<feature type="topological domain" description="Periplasmic" evidence="1">
    <location>
        <begin position="549"/>
        <end position="852"/>
    </location>
</feature>
<feature type="transmembrane region" description="Helical; Name=8" evidence="1">
    <location>
        <begin position="853"/>
        <end position="872"/>
    </location>
</feature>
<feature type="topological domain" description="Cytoplasmic" evidence="1">
    <location>
        <begin position="873"/>
        <end position="878"/>
    </location>
</feature>
<feature type="transmembrane region" description="Helical; Name=9" evidence="1">
    <location>
        <begin position="879"/>
        <end position="898"/>
    </location>
</feature>
<feature type="topological domain" description="Periplasmic" evidence="1">
    <location>
        <begin position="899"/>
        <end position="910"/>
    </location>
</feature>
<feature type="transmembrane region" description="Helical; Name=10" evidence="1">
    <location>
        <begin position="911"/>
        <end position="932"/>
    </location>
</feature>
<feature type="topological domain" description="Cytoplasmic" evidence="1">
    <location>
        <begin position="933"/>
        <end position="960"/>
    </location>
</feature>
<feature type="transmembrane region" description="Helical; Name=11" evidence="1">
    <location>
        <begin position="961"/>
        <end position="979"/>
    </location>
</feature>
<feature type="topological domain" description="Periplasmic" evidence="1">
    <location>
        <begin position="980"/>
        <end position="992"/>
    </location>
</feature>
<feature type="transmembrane region" description="Helical; Name=12" evidence="1">
    <location>
        <begin position="993"/>
        <end position="1015"/>
    </location>
</feature>
<feature type="topological domain" description="Cytoplasmic" evidence="1">
    <location>
        <begin position="1016"/>
        <end position="1032"/>
    </location>
</feature>
<gene>
    <name type="ordered locus">HI_0895</name>
</gene>
<organism>
    <name type="scientific">Haemophilus influenzae (strain ATCC 51907 / DSM 11121 / KW20 / Rd)</name>
    <dbReference type="NCBI Taxonomy" id="71421"/>
    <lineage>
        <taxon>Bacteria</taxon>
        <taxon>Pseudomonadati</taxon>
        <taxon>Pseudomonadota</taxon>
        <taxon>Gammaproteobacteria</taxon>
        <taxon>Pasteurellales</taxon>
        <taxon>Pasteurellaceae</taxon>
        <taxon>Haemophilus</taxon>
    </lineage>
</organism>
<evidence type="ECO:0000250" key="1"/>
<evidence type="ECO:0000305" key="2"/>
<proteinExistence type="inferred from homology"/>
<sequence length="1032" mass="111634">MYEEIRMKFTDIFIRRPVLAVSISLLMIILGLQAISKLAVREYPKMTTTVITVSTAYPGADANLIQAFVTSKLEESIAQADNIDYMSSTSAPSSSTITIKMKLNTDPAGALADVLAKVNAVKSALPNGIEDPSVSSSSGGSGIMYISFRSKKLDSSQVTDYINRVVKPQFFTIEGVAEVQVFGAAEYALRIWLDPQKMAAQNLSVPTVMSALSANNVQTAAGNDNGYYVSYRNKVETTTKSVEQLSNLIISSNGDDLVRLRDIATVELNKENDNSRATANGAESVVLAINPTSTANPLTVAEKIRPLYESIKTQLPDSMESDILYDRTIAINSSIHEVIKTIGEATLIVLVVILMFIGSFRAILIPILAIPISLIGVLMLLQSFNFSINLMTLLALILAIGLVVDDAIVVLENIDRHIKAGETPFRAAIIGTREIAVPVISMTIALIAVYSPMALMGGITGTLFKEFALTLAGAVFISGVVALTLSPMMSSKLLKSNAKPTWMEERVEHTLGKVNRVYEYMLDLVMLNRKSMLAFAVVIFSTLPFLFNSLSSELTPNEDKGAFIAIGNAPSSVNVDYIQNAMQPYMKNVMETPEVSFGMSIAGAPTSNSSLNIITLKDWKERSRKQSAIMNEINEKAKSIPEVSVSAFNIPEIDTGEQGPPVSIVLKTAQDYKSLANTAEKFLSAMKASGKFIYTNLDLTYDTAQMTISVDKEKAGTYGITMQQISNTLGSFLSGATVTRVDVDGRAYKVISQVKRDDRLSPESFQNYYLTASNGQSVPLSSVISMKLETQPTSLPRFSQLNSAEISAVPMPGISSGDAIAWLQQQATDNLPQGYTFDFKSEARQLVQEGNALAVTFALAVIIIFLVLAIQFESIRDPMVIMISVPLAVSGALVSLNILSFFSIAGTTLNIYSQVGLITLVGLITKHGILMCEVAKEEQLNHGKTRIEAITHAAKVRLRPILMTTAAMVAGLIPLLYATGAGAVSRFSIGIVIVAGLSIGTIFTLFVLPVVYSYVATEHKPLPVFDENKTTH</sequence>
<keyword id="KW-0997">Cell inner membrane</keyword>
<keyword id="KW-1003">Cell membrane</keyword>
<keyword id="KW-0472">Membrane</keyword>
<keyword id="KW-1185">Reference proteome</keyword>
<keyword id="KW-0812">Transmembrane</keyword>
<keyword id="KW-1133">Transmembrane helix</keyword>
<keyword id="KW-0813">Transport</keyword>
<protein>
    <recommendedName>
        <fullName>Uncharacterized transporter HI_0895</fullName>
    </recommendedName>
</protein>
<accession>Q57124</accession>
<accession>O05034</accession>
<name>Y895_HAEIN</name>
<reference key="1">
    <citation type="journal article" date="1995" name="Science">
        <title>Whole-genome random sequencing and assembly of Haemophilus influenzae Rd.</title>
        <authorList>
            <person name="Fleischmann R.D."/>
            <person name="Adams M.D."/>
            <person name="White O."/>
            <person name="Clayton R.A."/>
            <person name="Kirkness E.F."/>
            <person name="Kerlavage A.R."/>
            <person name="Bult C.J."/>
            <person name="Tomb J.-F."/>
            <person name="Dougherty B.A."/>
            <person name="Merrick J.M."/>
            <person name="McKenney K."/>
            <person name="Sutton G.G."/>
            <person name="FitzHugh W."/>
            <person name="Fields C.A."/>
            <person name="Gocayne J.D."/>
            <person name="Scott J.D."/>
            <person name="Shirley R."/>
            <person name="Liu L.-I."/>
            <person name="Glodek A."/>
            <person name="Kelley J.M."/>
            <person name="Weidman J.F."/>
            <person name="Phillips C.A."/>
            <person name="Spriggs T."/>
            <person name="Hedblom E."/>
            <person name="Cotton M.D."/>
            <person name="Utterback T.R."/>
            <person name="Hanna M.C."/>
            <person name="Nguyen D.T."/>
            <person name="Saudek D.M."/>
            <person name="Brandon R.C."/>
            <person name="Fine L.D."/>
            <person name="Fritchman J.L."/>
            <person name="Fuhrmann J.L."/>
            <person name="Geoghagen N.S.M."/>
            <person name="Gnehm C.L."/>
            <person name="McDonald L.A."/>
            <person name="Small K.V."/>
            <person name="Fraser C.M."/>
            <person name="Smith H.O."/>
            <person name="Venter J.C."/>
        </authorList>
    </citation>
    <scope>NUCLEOTIDE SEQUENCE [LARGE SCALE GENOMIC DNA]</scope>
    <source>
        <strain>ATCC 51907 / DSM 11121 / KW20 / Rd</strain>
    </source>
</reference>
<comment type="function">
    <text evidence="1">Could be a drug efflux pump.</text>
</comment>
<comment type="subcellular location">
    <subcellularLocation>
        <location evidence="1">Cell inner membrane</location>
        <topology evidence="1">Multi-pass membrane protein</topology>
    </subcellularLocation>
</comment>
<comment type="similarity">
    <text evidence="2">Belongs to the resistance-nodulation-cell division (RND) (TC 2.A.6) family.</text>
</comment>